<name>YQGF_NEIG1</name>
<feature type="chain" id="PRO_0000172102" description="Putative pre-16S rRNA nuclease">
    <location>
        <begin position="1"/>
        <end position="151"/>
    </location>
</feature>
<accession>Q5F936</accession>
<reference key="1">
    <citation type="submission" date="2003-03" db="EMBL/GenBank/DDBJ databases">
        <title>The complete genome sequence of Neisseria gonorrhoeae.</title>
        <authorList>
            <person name="Lewis L.A."/>
            <person name="Gillaspy A.F."/>
            <person name="McLaughlin R.E."/>
            <person name="Gipson M."/>
            <person name="Ducey T.F."/>
            <person name="Ownbey T."/>
            <person name="Hartman K."/>
            <person name="Nydick C."/>
            <person name="Carson M.B."/>
            <person name="Vaughn J."/>
            <person name="Thomson C."/>
            <person name="Song L."/>
            <person name="Lin S."/>
            <person name="Yuan X."/>
            <person name="Najar F."/>
            <person name="Zhan M."/>
            <person name="Ren Q."/>
            <person name="Zhu H."/>
            <person name="Qi S."/>
            <person name="Kenton S.M."/>
            <person name="Lai H."/>
            <person name="White J.D."/>
            <person name="Clifton S."/>
            <person name="Roe B.A."/>
            <person name="Dyer D.W."/>
        </authorList>
    </citation>
    <scope>NUCLEOTIDE SEQUENCE [LARGE SCALE GENOMIC DNA]</scope>
    <source>
        <strain>ATCC 700825 / FA 1090</strain>
    </source>
</reference>
<dbReference type="EC" id="3.1.-.-" evidence="1"/>
<dbReference type="EMBL" id="AE004969">
    <property type="protein sequence ID" value="AAW89301.1"/>
    <property type="molecule type" value="Genomic_DNA"/>
</dbReference>
<dbReference type="RefSeq" id="YP_207713.1">
    <property type="nucleotide sequence ID" value="NC_002946.2"/>
</dbReference>
<dbReference type="SMR" id="Q5F936"/>
<dbReference type="STRING" id="242231.NGO_0568"/>
<dbReference type="KEGG" id="ngo:NGO_0568"/>
<dbReference type="PATRIC" id="fig|242231.10.peg.671"/>
<dbReference type="HOGENOM" id="CLU_098240_3_2_4"/>
<dbReference type="Proteomes" id="UP000000535">
    <property type="component" value="Chromosome"/>
</dbReference>
<dbReference type="GO" id="GO:0005829">
    <property type="term" value="C:cytosol"/>
    <property type="evidence" value="ECO:0007669"/>
    <property type="project" value="TreeGrafter"/>
</dbReference>
<dbReference type="GO" id="GO:0004518">
    <property type="term" value="F:nuclease activity"/>
    <property type="evidence" value="ECO:0007669"/>
    <property type="project" value="UniProtKB-KW"/>
</dbReference>
<dbReference type="GO" id="GO:0000967">
    <property type="term" value="P:rRNA 5'-end processing"/>
    <property type="evidence" value="ECO:0007669"/>
    <property type="project" value="UniProtKB-UniRule"/>
</dbReference>
<dbReference type="CDD" id="cd16964">
    <property type="entry name" value="YqgF"/>
    <property type="match status" value="1"/>
</dbReference>
<dbReference type="FunFam" id="3.30.420.140:FF:000012">
    <property type="entry name" value="Putative pre-16S rRNA nuclease"/>
    <property type="match status" value="1"/>
</dbReference>
<dbReference type="Gene3D" id="3.30.420.140">
    <property type="entry name" value="YqgF/RNase H-like domain"/>
    <property type="match status" value="1"/>
</dbReference>
<dbReference type="HAMAP" id="MF_00651">
    <property type="entry name" value="Nuclease_YqgF"/>
    <property type="match status" value="1"/>
</dbReference>
<dbReference type="InterPro" id="IPR012337">
    <property type="entry name" value="RNaseH-like_sf"/>
</dbReference>
<dbReference type="InterPro" id="IPR005227">
    <property type="entry name" value="YqgF"/>
</dbReference>
<dbReference type="InterPro" id="IPR006641">
    <property type="entry name" value="YqgF/RNaseH-like_dom"/>
</dbReference>
<dbReference type="InterPro" id="IPR037027">
    <property type="entry name" value="YqgF/RNaseH-like_dom_sf"/>
</dbReference>
<dbReference type="NCBIfam" id="TIGR00250">
    <property type="entry name" value="RNAse_H_YqgF"/>
    <property type="match status" value="1"/>
</dbReference>
<dbReference type="PANTHER" id="PTHR33317">
    <property type="entry name" value="POLYNUCLEOTIDYL TRANSFERASE, RIBONUCLEASE H-LIKE SUPERFAMILY PROTEIN"/>
    <property type="match status" value="1"/>
</dbReference>
<dbReference type="PANTHER" id="PTHR33317:SF4">
    <property type="entry name" value="POLYNUCLEOTIDYL TRANSFERASE, RIBONUCLEASE H-LIKE SUPERFAMILY PROTEIN"/>
    <property type="match status" value="1"/>
</dbReference>
<dbReference type="Pfam" id="PF03652">
    <property type="entry name" value="RuvX"/>
    <property type="match status" value="1"/>
</dbReference>
<dbReference type="SMART" id="SM00732">
    <property type="entry name" value="YqgFc"/>
    <property type="match status" value="1"/>
</dbReference>
<dbReference type="SUPFAM" id="SSF53098">
    <property type="entry name" value="Ribonuclease H-like"/>
    <property type="match status" value="1"/>
</dbReference>
<protein>
    <recommendedName>
        <fullName evidence="1">Putative pre-16S rRNA nuclease</fullName>
        <ecNumber evidence="1">3.1.-.-</ecNumber>
    </recommendedName>
</protein>
<evidence type="ECO:0000255" key="1">
    <source>
        <dbReference type="HAMAP-Rule" id="MF_00651"/>
    </source>
</evidence>
<organism>
    <name type="scientific">Neisseria gonorrhoeae (strain ATCC 700825 / FA 1090)</name>
    <dbReference type="NCBI Taxonomy" id="242231"/>
    <lineage>
        <taxon>Bacteria</taxon>
        <taxon>Pseudomonadati</taxon>
        <taxon>Pseudomonadota</taxon>
        <taxon>Betaproteobacteria</taxon>
        <taxon>Neisseriales</taxon>
        <taxon>Neisseriaceae</taxon>
        <taxon>Neisseria</taxon>
    </lineage>
</organism>
<proteinExistence type="inferred from homology"/>
<gene>
    <name type="ordered locus">NGO_0568</name>
</gene>
<keyword id="KW-0963">Cytoplasm</keyword>
<keyword id="KW-0378">Hydrolase</keyword>
<keyword id="KW-0540">Nuclease</keyword>
<keyword id="KW-1185">Reference proteome</keyword>
<keyword id="KW-0690">Ribosome biogenesis</keyword>
<sequence length="151" mass="16427">MHKIPKGTALAFDFGEARIGVAQGDAELGLSHPLATVTGGSNDEKFAAIAKLVQEWQPRYFVVGLPVHADGTEHEMTHLSRKFGRRLNGRFNLPVYWVDERLSSVCAESLLSEAQVLGKKRKSVLDQVAAQAILHGFLEGGPAECFNGREG</sequence>
<comment type="function">
    <text evidence="1">Could be a nuclease involved in processing of the 5'-end of pre-16S rRNA.</text>
</comment>
<comment type="subcellular location">
    <subcellularLocation>
        <location evidence="1">Cytoplasm</location>
    </subcellularLocation>
</comment>
<comment type="similarity">
    <text evidence="1">Belongs to the YqgF nuclease family.</text>
</comment>